<proteinExistence type="inferred from homology"/>
<comment type="catalytic activity">
    <reaction evidence="1">
        <text>CMP + ATP = CDP + ADP</text>
        <dbReference type="Rhea" id="RHEA:11600"/>
        <dbReference type="ChEBI" id="CHEBI:30616"/>
        <dbReference type="ChEBI" id="CHEBI:58069"/>
        <dbReference type="ChEBI" id="CHEBI:60377"/>
        <dbReference type="ChEBI" id="CHEBI:456216"/>
        <dbReference type="EC" id="2.7.4.25"/>
    </reaction>
</comment>
<comment type="catalytic activity">
    <reaction evidence="1">
        <text>dCMP + ATP = dCDP + ADP</text>
        <dbReference type="Rhea" id="RHEA:25094"/>
        <dbReference type="ChEBI" id="CHEBI:30616"/>
        <dbReference type="ChEBI" id="CHEBI:57566"/>
        <dbReference type="ChEBI" id="CHEBI:58593"/>
        <dbReference type="ChEBI" id="CHEBI:456216"/>
        <dbReference type="EC" id="2.7.4.25"/>
    </reaction>
</comment>
<comment type="subcellular location">
    <subcellularLocation>
        <location evidence="1">Cytoplasm</location>
    </subcellularLocation>
</comment>
<comment type="similarity">
    <text evidence="1">Belongs to the cytidylate kinase family. Type 1 subfamily.</text>
</comment>
<feature type="chain" id="PRO_1000071820" description="Cytidylate kinase">
    <location>
        <begin position="1"/>
        <end position="222"/>
    </location>
</feature>
<feature type="binding site" evidence="1">
    <location>
        <begin position="11"/>
        <end position="19"/>
    </location>
    <ligand>
        <name>ATP</name>
        <dbReference type="ChEBI" id="CHEBI:30616"/>
    </ligand>
</feature>
<dbReference type="EC" id="2.7.4.25" evidence="1"/>
<dbReference type="EMBL" id="CP000612">
    <property type="protein sequence ID" value="ABO49686.1"/>
    <property type="molecule type" value="Genomic_DNA"/>
</dbReference>
<dbReference type="RefSeq" id="WP_011877512.1">
    <property type="nucleotide sequence ID" value="NC_009253.1"/>
</dbReference>
<dbReference type="SMR" id="A4J3N3"/>
<dbReference type="STRING" id="349161.Dred_1152"/>
<dbReference type="KEGG" id="drm:Dred_1152"/>
<dbReference type="eggNOG" id="COG0283">
    <property type="taxonomic scope" value="Bacteria"/>
</dbReference>
<dbReference type="HOGENOM" id="CLU_079959_0_2_9"/>
<dbReference type="OrthoDB" id="9807434at2"/>
<dbReference type="Proteomes" id="UP000001556">
    <property type="component" value="Chromosome"/>
</dbReference>
<dbReference type="GO" id="GO:0005829">
    <property type="term" value="C:cytosol"/>
    <property type="evidence" value="ECO:0007669"/>
    <property type="project" value="TreeGrafter"/>
</dbReference>
<dbReference type="GO" id="GO:0005524">
    <property type="term" value="F:ATP binding"/>
    <property type="evidence" value="ECO:0007669"/>
    <property type="project" value="UniProtKB-UniRule"/>
</dbReference>
<dbReference type="GO" id="GO:0036430">
    <property type="term" value="F:CMP kinase activity"/>
    <property type="evidence" value="ECO:0007669"/>
    <property type="project" value="RHEA"/>
</dbReference>
<dbReference type="GO" id="GO:0036431">
    <property type="term" value="F:dCMP kinase activity"/>
    <property type="evidence" value="ECO:0007669"/>
    <property type="project" value="RHEA"/>
</dbReference>
<dbReference type="GO" id="GO:0015949">
    <property type="term" value="P:nucleobase-containing small molecule interconversion"/>
    <property type="evidence" value="ECO:0007669"/>
    <property type="project" value="TreeGrafter"/>
</dbReference>
<dbReference type="GO" id="GO:0006220">
    <property type="term" value="P:pyrimidine nucleotide metabolic process"/>
    <property type="evidence" value="ECO:0007669"/>
    <property type="project" value="UniProtKB-UniRule"/>
</dbReference>
<dbReference type="CDD" id="cd02020">
    <property type="entry name" value="CMPK"/>
    <property type="match status" value="1"/>
</dbReference>
<dbReference type="Gene3D" id="3.40.50.300">
    <property type="entry name" value="P-loop containing nucleotide triphosphate hydrolases"/>
    <property type="match status" value="1"/>
</dbReference>
<dbReference type="HAMAP" id="MF_00238">
    <property type="entry name" value="Cytidyl_kinase_type1"/>
    <property type="match status" value="1"/>
</dbReference>
<dbReference type="InterPro" id="IPR003136">
    <property type="entry name" value="Cytidylate_kin"/>
</dbReference>
<dbReference type="InterPro" id="IPR011994">
    <property type="entry name" value="Cytidylate_kinase_dom"/>
</dbReference>
<dbReference type="InterPro" id="IPR027417">
    <property type="entry name" value="P-loop_NTPase"/>
</dbReference>
<dbReference type="NCBIfam" id="TIGR00017">
    <property type="entry name" value="cmk"/>
    <property type="match status" value="1"/>
</dbReference>
<dbReference type="PANTHER" id="PTHR21299:SF2">
    <property type="entry name" value="CYTIDYLATE KINASE"/>
    <property type="match status" value="1"/>
</dbReference>
<dbReference type="PANTHER" id="PTHR21299">
    <property type="entry name" value="CYTIDYLATE KINASE/PANTOATE-BETA-ALANINE LIGASE"/>
    <property type="match status" value="1"/>
</dbReference>
<dbReference type="Pfam" id="PF02224">
    <property type="entry name" value="Cytidylate_kin"/>
    <property type="match status" value="1"/>
</dbReference>
<dbReference type="SUPFAM" id="SSF52540">
    <property type="entry name" value="P-loop containing nucleoside triphosphate hydrolases"/>
    <property type="match status" value="1"/>
</dbReference>
<organism>
    <name type="scientific">Desulforamulus reducens (strain ATCC BAA-1160 / DSM 100696 / MI-1)</name>
    <name type="common">Desulfotomaculum reducens</name>
    <dbReference type="NCBI Taxonomy" id="349161"/>
    <lineage>
        <taxon>Bacteria</taxon>
        <taxon>Bacillati</taxon>
        <taxon>Bacillota</taxon>
        <taxon>Clostridia</taxon>
        <taxon>Eubacteriales</taxon>
        <taxon>Peptococcaceae</taxon>
        <taxon>Desulforamulus</taxon>
    </lineage>
</organism>
<sequence>MTEHKCIAIDGPAGAGKSTVAKKVAQKLNLLYIDTGAMYRAVTLKALRERINLWDDIALIELAKRTIITLLAGQKQSVLLDGLDVTREIRTPEVTNNVSIVAKIAGVREVLVQRQREMAEEAGVVMDGRDIGTVVLPKAKAKFFLTASAEERARRRAKEMMNFGYDVDLEQLIKEIEERDFMDSNRAVSPLVPAEDAVLIDSSGMTIDEVVNSIITWVEKGK</sequence>
<gene>
    <name evidence="1" type="primary">cmk</name>
    <name type="ordered locus">Dred_1152</name>
</gene>
<reference key="1">
    <citation type="submission" date="2007-03" db="EMBL/GenBank/DDBJ databases">
        <title>Complete sequence of Desulfotomaculum reducens MI-1.</title>
        <authorList>
            <consortium name="US DOE Joint Genome Institute"/>
            <person name="Copeland A."/>
            <person name="Lucas S."/>
            <person name="Lapidus A."/>
            <person name="Barry K."/>
            <person name="Detter J.C."/>
            <person name="Glavina del Rio T."/>
            <person name="Hammon N."/>
            <person name="Israni S."/>
            <person name="Dalin E."/>
            <person name="Tice H."/>
            <person name="Pitluck S."/>
            <person name="Sims D."/>
            <person name="Brettin T."/>
            <person name="Bruce D."/>
            <person name="Han C."/>
            <person name="Tapia R."/>
            <person name="Schmutz J."/>
            <person name="Larimer F."/>
            <person name="Land M."/>
            <person name="Hauser L."/>
            <person name="Kyrpides N."/>
            <person name="Kim E."/>
            <person name="Tebo B.M."/>
            <person name="Richardson P."/>
        </authorList>
    </citation>
    <scope>NUCLEOTIDE SEQUENCE [LARGE SCALE GENOMIC DNA]</scope>
    <source>
        <strain>ATCC BAA-1160 / DSM 100696 / MI-1</strain>
    </source>
</reference>
<accession>A4J3N3</accession>
<protein>
    <recommendedName>
        <fullName evidence="1">Cytidylate kinase</fullName>
        <shortName evidence="1">CK</shortName>
        <ecNumber evidence="1">2.7.4.25</ecNumber>
    </recommendedName>
    <alternativeName>
        <fullName evidence="1">Cytidine monophosphate kinase</fullName>
        <shortName evidence="1">CMP kinase</shortName>
    </alternativeName>
</protein>
<evidence type="ECO:0000255" key="1">
    <source>
        <dbReference type="HAMAP-Rule" id="MF_00238"/>
    </source>
</evidence>
<name>KCY_DESRM</name>
<keyword id="KW-0067">ATP-binding</keyword>
<keyword id="KW-0963">Cytoplasm</keyword>
<keyword id="KW-0418">Kinase</keyword>
<keyword id="KW-0547">Nucleotide-binding</keyword>
<keyword id="KW-1185">Reference proteome</keyword>
<keyword id="KW-0808">Transferase</keyword>